<accession>Q8MJG1</accession>
<accession>A7E383</accession>
<accession>Q0VCL7</accession>
<sequence>MTRDFKPGDLIFAKMKGYPHWPARVDEVPDGAVKPPTNKLPIFFFGTHETAFLGPKDIFPYSENKEKYGKPNKRKGFNEGLWEIDNNPKVKFSSQQASAKQSNASSDVEVEEKETSVSKEDTDPEEKASNEDVTKAIDITTPKAARRGRKRKAEKQVETEEAGVVTTATASANLKVSPKRGRPAATEVKIPKPRGRPKMVKQPCPSESDMITEEDKSKKKGQEEKQPKKQLKKDEEGQKEEEKPRKEPDKKEGKKEVESKRKNLAKTGVTSTSDSEEEGDDQEGEKKRKGGRNFQTAHRRNMLKGQHEKEAADRKRKQEEQMETEQQNKDEGKKPEVKKVEKKRETSMDSRLQRIHAEIKNSLKIDNLDVNRCIEALDELASLQVTMQQAQKHTEMITTLKKIRRFKVSQVIMEKSTMLYNKFKNMFLVGEGDSVITQVLNKSLAEQRQHEEANKTKDQGKKGPNKKLEKEQTGSKTLNGGSDAQDSNQPQHNGDSNEESKDNHEASSKKKPSSEERETEISLKDSTLDN</sequence>
<reference key="1">
    <citation type="submission" date="2007-08" db="EMBL/GenBank/DDBJ databases">
        <authorList>
            <consortium name="NIH - Mammalian Gene Collection (MGC) project"/>
        </authorList>
    </citation>
    <scope>NUCLEOTIDE SEQUENCE [LARGE SCALE MRNA] OF 1-458</scope>
    <source>
        <strain>Hereford</strain>
        <tissue>Fetal lung</tissue>
        <tissue>Fetal pons</tissue>
    </source>
</reference>
<reference key="2">
    <citation type="submission" date="2002-01" db="EMBL/GenBank/DDBJ databases">
        <title>Lens epithelium-derived growth factor (LEDGF): sequence conservation among animal species.</title>
        <authorList>
            <person name="Adachi N."/>
            <person name="Singh D.P."/>
            <person name="Shinohara T."/>
        </authorList>
    </citation>
    <scope>NUCLEOTIDE SEQUENCE [MRNA] OF 48-530</scope>
    <source>
        <tissue>Brain</tissue>
    </source>
</reference>
<keyword id="KW-0164">Citrullination</keyword>
<keyword id="KW-0175">Coiled coil</keyword>
<keyword id="KW-0238">DNA-binding</keyword>
<keyword id="KW-1017">Isopeptide bond</keyword>
<keyword id="KW-0539">Nucleus</keyword>
<keyword id="KW-0597">Phosphoprotein</keyword>
<keyword id="KW-1185">Reference proteome</keyword>
<keyword id="KW-0804">Transcription</keyword>
<keyword id="KW-0805">Transcription regulation</keyword>
<keyword id="KW-0832">Ubl conjugation</keyword>
<gene>
    <name type="primary">PSIP1</name>
    <name type="synonym">LEDGF</name>
</gene>
<organism>
    <name type="scientific">Bos taurus</name>
    <name type="common">Bovine</name>
    <dbReference type="NCBI Taxonomy" id="9913"/>
    <lineage>
        <taxon>Eukaryota</taxon>
        <taxon>Metazoa</taxon>
        <taxon>Chordata</taxon>
        <taxon>Craniata</taxon>
        <taxon>Vertebrata</taxon>
        <taxon>Euteleostomi</taxon>
        <taxon>Mammalia</taxon>
        <taxon>Eutheria</taxon>
        <taxon>Laurasiatheria</taxon>
        <taxon>Artiodactyla</taxon>
        <taxon>Ruminantia</taxon>
        <taxon>Pecora</taxon>
        <taxon>Bovidae</taxon>
        <taxon>Bovinae</taxon>
        <taxon>Bos</taxon>
    </lineage>
</organism>
<proteinExistence type="evidence at transcript level"/>
<evidence type="ECO:0000250" key="1"/>
<evidence type="ECO:0000250" key="2">
    <source>
        <dbReference type="UniProtKB" id="O75475"/>
    </source>
</evidence>
<evidence type="ECO:0000250" key="3">
    <source>
        <dbReference type="UniProtKB" id="Q812D1"/>
    </source>
</evidence>
<evidence type="ECO:0000250" key="4">
    <source>
        <dbReference type="UniProtKB" id="Q99JF8"/>
    </source>
</evidence>
<evidence type="ECO:0000255" key="5"/>
<evidence type="ECO:0000255" key="6">
    <source>
        <dbReference type="PROSITE-ProRule" id="PRU00162"/>
    </source>
</evidence>
<evidence type="ECO:0000256" key="7">
    <source>
        <dbReference type="SAM" id="MobiDB-lite"/>
    </source>
</evidence>
<evidence type="ECO:0000305" key="8"/>
<comment type="function">
    <text evidence="2">Transcriptional coactivator involved in neuroepithelial stem cell differentiation and neurogenesis. Involved in particular in lens epithelial cell gene regulation and stress responses. May play an important role in lens epithelial to fiber cell terminal differentiation. May play a protective role during stress-induced apoptosis (By similarity).</text>
</comment>
<comment type="subunit">
    <text evidence="2">Monomer (By similarity). Interacts with IFRD1/PC4 (By similarity). Interacts (via IBD domain) with POGZ (via IBM motif) and CDCA7L (via IBM motifs) (By similarity). Interacts (via IBD domain) with KMT2A (via IBM motifs) with a moderate affinity whereas interacts with the KMT2A-MEN1 complex with a greater affinity; MEN1 enhances interaction of KMT2A with PSIP1 (By similarity). Interacts (via IBD domain) with IWS1 (via IBM motif), MED1 (via IBM motif) and DBF4 (via IBM motifs) (By similarity).</text>
</comment>
<comment type="subcellular location">
    <subcellularLocation>
        <location evidence="2">Nucleus</location>
    </subcellularLocation>
</comment>
<comment type="PTM">
    <text evidence="4">Citrullinated by PADI4.</text>
</comment>
<comment type="similarity">
    <text evidence="8">Belongs to the HDGF family.</text>
</comment>
<comment type="sequence caution" evidence="8">
    <conflict type="miscellaneous discrepancy">
        <sequence resource="EMBL-CDS" id="AAI20107"/>
    </conflict>
    <text>Contaminating sequence. Potential poly-A sequence.</text>
</comment>
<comment type="sequence caution" evidence="8">
    <conflict type="miscellaneous discrepancy">
        <sequence resource="EMBL-CDS" id="AAI51755"/>
    </conflict>
    <text>Contaminating sequence. Potential poly-A sequence.</text>
</comment>
<name>PSIP1_BOVIN</name>
<feature type="chain" id="PRO_0000191706" description="PC4 and SFRS1-interacting protein">
    <location>
        <begin position="1"/>
        <end position="530"/>
    </location>
</feature>
<feature type="domain" description="PWWP" evidence="6">
    <location>
        <begin position="1"/>
        <end position="64"/>
    </location>
</feature>
<feature type="region of interest" description="Disordered" evidence="7">
    <location>
        <begin position="88"/>
        <end position="349"/>
    </location>
</feature>
<feature type="region of interest" description="Integrase-binding domain (IBD)" evidence="2">
    <location>
        <begin position="340"/>
        <end position="417"/>
    </location>
</feature>
<feature type="region of interest" description="Disordered" evidence="7">
    <location>
        <begin position="446"/>
        <end position="530"/>
    </location>
</feature>
<feature type="coiled-coil region" evidence="5">
    <location>
        <begin position="306"/>
        <end position="334"/>
    </location>
</feature>
<feature type="coiled-coil region" evidence="5">
    <location>
        <begin position="371"/>
        <end position="395"/>
    </location>
</feature>
<feature type="short sequence motif" description="Nuclear localization signal" evidence="2">
    <location>
        <begin position="146"/>
        <end position="156"/>
    </location>
</feature>
<feature type="compositionally biased region" description="Low complexity" evidence="7">
    <location>
        <begin position="93"/>
        <end position="107"/>
    </location>
</feature>
<feature type="compositionally biased region" description="Basic and acidic residues" evidence="7">
    <location>
        <begin position="113"/>
        <end position="135"/>
    </location>
</feature>
<feature type="compositionally biased region" description="Basic residues" evidence="7">
    <location>
        <begin position="144"/>
        <end position="153"/>
    </location>
</feature>
<feature type="compositionally biased region" description="Basic and acidic residues" evidence="7">
    <location>
        <begin position="213"/>
        <end position="261"/>
    </location>
</feature>
<feature type="compositionally biased region" description="Acidic residues" evidence="7">
    <location>
        <begin position="274"/>
        <end position="283"/>
    </location>
</feature>
<feature type="compositionally biased region" description="Basic residues" evidence="7">
    <location>
        <begin position="287"/>
        <end position="302"/>
    </location>
</feature>
<feature type="compositionally biased region" description="Basic and acidic residues" evidence="7">
    <location>
        <begin position="305"/>
        <end position="349"/>
    </location>
</feature>
<feature type="compositionally biased region" description="Basic and acidic residues" evidence="7">
    <location>
        <begin position="446"/>
        <end position="473"/>
    </location>
</feature>
<feature type="compositionally biased region" description="Polar residues" evidence="7">
    <location>
        <begin position="474"/>
        <end position="494"/>
    </location>
</feature>
<feature type="compositionally biased region" description="Basic and acidic residues" evidence="7">
    <location>
        <begin position="498"/>
        <end position="530"/>
    </location>
</feature>
<feature type="modified residue" description="Phosphoserine" evidence="3">
    <location>
        <position position="102"/>
    </location>
</feature>
<feature type="modified residue" description="Phosphoserine" evidence="4">
    <location>
        <position position="105"/>
    </location>
</feature>
<feature type="modified residue" description="Phosphoserine" evidence="2">
    <location>
        <position position="106"/>
    </location>
</feature>
<feature type="modified residue" description="Phosphothreonine" evidence="4">
    <location>
        <position position="115"/>
    </location>
</feature>
<feature type="modified residue" description="Phosphothreonine" evidence="2">
    <location>
        <position position="122"/>
    </location>
</feature>
<feature type="modified residue" description="Phosphoserine" evidence="2">
    <location>
        <position position="129"/>
    </location>
</feature>
<feature type="modified residue" description="Phosphothreonine" evidence="2">
    <location>
        <position position="141"/>
    </location>
</feature>
<feature type="modified residue" description="Phosphothreonine" evidence="2">
    <location>
        <position position="167"/>
    </location>
</feature>
<feature type="modified residue" description="Phosphoserine" evidence="2">
    <location>
        <position position="177"/>
    </location>
</feature>
<feature type="modified residue" description="Phosphoserine" evidence="2">
    <location>
        <position position="206"/>
    </location>
</feature>
<feature type="modified residue" description="Phosphoserine" evidence="2">
    <location>
        <position position="271"/>
    </location>
</feature>
<feature type="modified residue" description="Phosphothreonine" evidence="2">
    <location>
        <position position="272"/>
    </location>
</feature>
<feature type="modified residue" description="Phosphoserine" evidence="2">
    <location>
        <position position="273"/>
    </location>
</feature>
<feature type="modified residue" description="Phosphoserine" evidence="2">
    <location>
        <position position="275"/>
    </location>
</feature>
<feature type="modified residue" description="Phosphoserine" evidence="2">
    <location>
        <position position="434"/>
    </location>
</feature>
<feature type="modified residue" description="Phosphothreonine" evidence="2">
    <location>
        <position position="437"/>
    </location>
</feature>
<feature type="modified residue" description="Phosphoserine" evidence="2">
    <location>
        <position position="443"/>
    </location>
</feature>
<feature type="modified residue" description="Phosphoserine" evidence="2">
    <location>
        <position position="514"/>
    </location>
</feature>
<feature type="modified residue" description="Citrulline" evidence="1">
    <location>
        <position position="517"/>
    </location>
</feature>
<feature type="modified residue" description="Phosphoserine" evidence="2">
    <location>
        <position position="522"/>
    </location>
</feature>
<feature type="modified residue" description="Phosphothreonine" evidence="2">
    <location>
        <position position="527"/>
    </location>
</feature>
<feature type="cross-link" description="Glycyl lysine isopeptide (Lys-Gly) (interchain with G-Cter in SUMO2)" evidence="2">
    <location>
        <position position="75"/>
    </location>
</feature>
<dbReference type="EMBL" id="BC120106">
    <property type="protein sequence ID" value="AAI20107.1"/>
    <property type="status" value="ALT_SEQ"/>
    <property type="molecule type" value="mRNA"/>
</dbReference>
<dbReference type="EMBL" id="BC151754">
    <property type="protein sequence ID" value="AAI51755.1"/>
    <property type="status" value="ALT_SEQ"/>
    <property type="molecule type" value="mRNA"/>
</dbReference>
<dbReference type="EMBL" id="AF474175">
    <property type="protein sequence ID" value="AAM90841.1"/>
    <property type="molecule type" value="mRNA"/>
</dbReference>
<dbReference type="RefSeq" id="NP_001193405.1">
    <property type="nucleotide sequence ID" value="NM_001206476.1"/>
</dbReference>
<dbReference type="BMRB" id="Q8MJG1"/>
<dbReference type="SMR" id="Q8MJG1"/>
<dbReference type="FunCoup" id="Q8MJG1">
    <property type="interactions" value="2737"/>
</dbReference>
<dbReference type="STRING" id="9913.ENSBTAP00000010356"/>
<dbReference type="PeptideAtlas" id="Q8MJG1"/>
<dbReference type="Ensembl" id="ENSBTAT00000010356.6">
    <property type="protein sequence ID" value="ENSBTAP00000010356.6"/>
    <property type="gene ID" value="ENSBTAG00000007872.7"/>
</dbReference>
<dbReference type="GeneID" id="282011"/>
<dbReference type="KEGG" id="bta:282011"/>
<dbReference type="CTD" id="11168"/>
<dbReference type="VEuPathDB" id="HostDB:ENSBTAG00000007872"/>
<dbReference type="VGNC" id="VGNC:33436">
    <property type="gene designation" value="PSIP1"/>
</dbReference>
<dbReference type="eggNOG" id="KOG1904">
    <property type="taxonomic scope" value="Eukaryota"/>
</dbReference>
<dbReference type="GeneTree" id="ENSGT00940000154706"/>
<dbReference type="InParanoid" id="Q8MJG1"/>
<dbReference type="OMA" id="HKKFFAG"/>
<dbReference type="OrthoDB" id="62853at2759"/>
<dbReference type="Reactome" id="R-BTA-9772755">
    <property type="pathway name" value="Formation of WDR5-containing histone-modifying complexes"/>
</dbReference>
<dbReference type="Proteomes" id="UP000009136">
    <property type="component" value="Chromosome 8"/>
</dbReference>
<dbReference type="Bgee" id="ENSBTAG00000007872">
    <property type="expression patterns" value="Expressed in spermatocyte and 108 other cell types or tissues"/>
</dbReference>
<dbReference type="GO" id="GO:0000791">
    <property type="term" value="C:euchromatin"/>
    <property type="evidence" value="ECO:0000250"/>
    <property type="project" value="UniProtKB"/>
</dbReference>
<dbReference type="GO" id="GO:0000792">
    <property type="term" value="C:heterochromatin"/>
    <property type="evidence" value="ECO:0000250"/>
    <property type="project" value="UniProtKB"/>
</dbReference>
<dbReference type="GO" id="GO:0005634">
    <property type="term" value="C:nucleus"/>
    <property type="evidence" value="ECO:0000318"/>
    <property type="project" value="GO_Central"/>
</dbReference>
<dbReference type="GO" id="GO:0003682">
    <property type="term" value="F:chromatin binding"/>
    <property type="evidence" value="ECO:0000250"/>
    <property type="project" value="UniProtKB"/>
</dbReference>
<dbReference type="GO" id="GO:0140297">
    <property type="term" value="F:DNA-binding transcription factor binding"/>
    <property type="evidence" value="ECO:0000250"/>
    <property type="project" value="UniProtKB"/>
</dbReference>
<dbReference type="GO" id="GO:0097100">
    <property type="term" value="F:supercoiled DNA binding"/>
    <property type="evidence" value="ECO:0000250"/>
    <property type="project" value="UniProtKB"/>
</dbReference>
<dbReference type="GO" id="GO:0003713">
    <property type="term" value="F:transcription coactivator activity"/>
    <property type="evidence" value="ECO:0000250"/>
    <property type="project" value="UniProtKB"/>
</dbReference>
<dbReference type="GO" id="GO:0006338">
    <property type="term" value="P:chromatin remodeling"/>
    <property type="evidence" value="ECO:0000318"/>
    <property type="project" value="GO_Central"/>
</dbReference>
<dbReference type="GO" id="GO:0000395">
    <property type="term" value="P:mRNA 5'-splice site recognition"/>
    <property type="evidence" value="ECO:0000250"/>
    <property type="project" value="UniProtKB"/>
</dbReference>
<dbReference type="GO" id="GO:0045944">
    <property type="term" value="P:positive regulation of transcription by RNA polymerase II"/>
    <property type="evidence" value="ECO:0000250"/>
    <property type="project" value="UniProtKB"/>
</dbReference>
<dbReference type="GO" id="GO:0009408">
    <property type="term" value="P:response to heat"/>
    <property type="evidence" value="ECO:0000250"/>
    <property type="project" value="UniProtKB"/>
</dbReference>
<dbReference type="GO" id="GO:0006979">
    <property type="term" value="P:response to oxidative stress"/>
    <property type="evidence" value="ECO:0000250"/>
    <property type="project" value="UniProtKB"/>
</dbReference>
<dbReference type="CDD" id="cd20151">
    <property type="entry name" value="PWWP_PSIP"/>
    <property type="match status" value="1"/>
</dbReference>
<dbReference type="FunFam" id="2.30.30.140:FF:000017">
    <property type="entry name" value="hepatoma-derived growth factor isoform X1"/>
    <property type="match status" value="1"/>
</dbReference>
<dbReference type="FunFam" id="1.20.930.10:FF:000005">
    <property type="entry name" value="PC4 and SFRS1-interacting protein-like isoform X1"/>
    <property type="match status" value="1"/>
</dbReference>
<dbReference type="Gene3D" id="2.30.30.140">
    <property type="match status" value="1"/>
</dbReference>
<dbReference type="Gene3D" id="1.20.930.10">
    <property type="entry name" value="Conserved domain common to transcription factors TFIIS, elongin A, CRSP70"/>
    <property type="match status" value="1"/>
</dbReference>
<dbReference type="InterPro" id="IPR036218">
    <property type="entry name" value="HIVI-bd_sf"/>
</dbReference>
<dbReference type="InterPro" id="IPR021567">
    <property type="entry name" value="LEDGF_IBD"/>
</dbReference>
<dbReference type="InterPro" id="IPR000313">
    <property type="entry name" value="PWWP_dom"/>
</dbReference>
<dbReference type="InterPro" id="IPR035441">
    <property type="entry name" value="TFIIS/LEDGF_dom_sf"/>
</dbReference>
<dbReference type="PANTHER" id="PTHR12550">
    <property type="entry name" value="HEPATOMA-DERIVED GROWTH FACTOR-RELATED"/>
    <property type="match status" value="1"/>
</dbReference>
<dbReference type="PANTHER" id="PTHR12550:SF42">
    <property type="entry name" value="PC4 AND SFRS1-INTERACTING PROTEIN"/>
    <property type="match status" value="1"/>
</dbReference>
<dbReference type="Pfam" id="PF11467">
    <property type="entry name" value="LEDGF"/>
    <property type="match status" value="1"/>
</dbReference>
<dbReference type="Pfam" id="PF00855">
    <property type="entry name" value="PWWP"/>
    <property type="match status" value="1"/>
</dbReference>
<dbReference type="PRINTS" id="PR01503">
    <property type="entry name" value="TREACLE"/>
</dbReference>
<dbReference type="SMART" id="SM00293">
    <property type="entry name" value="PWWP"/>
    <property type="match status" value="1"/>
</dbReference>
<dbReference type="SUPFAM" id="SSF140576">
    <property type="entry name" value="HIV integrase-binding domain"/>
    <property type="match status" value="1"/>
</dbReference>
<dbReference type="SUPFAM" id="SSF63748">
    <property type="entry name" value="Tudor/PWWP/MBT"/>
    <property type="match status" value="1"/>
</dbReference>
<dbReference type="PROSITE" id="PS50812">
    <property type="entry name" value="PWWP"/>
    <property type="match status" value="1"/>
</dbReference>
<protein>
    <recommendedName>
        <fullName>PC4 and SFRS1-interacting protein</fullName>
    </recommendedName>
    <alternativeName>
        <fullName>Lens epithelium-derived growth factor</fullName>
    </alternativeName>
</protein>